<gene>
    <name evidence="2" type="primary">rpsL</name>
    <name type="ordered locus">sce0838</name>
</gene>
<dbReference type="EMBL" id="AM746676">
    <property type="protein sequence ID" value="CAN90995.1"/>
    <property type="molecule type" value="Genomic_DNA"/>
</dbReference>
<dbReference type="RefSeq" id="WP_012233473.1">
    <property type="nucleotide sequence ID" value="NC_010162.1"/>
</dbReference>
<dbReference type="SMR" id="A9ETB7"/>
<dbReference type="STRING" id="448385.sce0838"/>
<dbReference type="KEGG" id="scl:sce0838"/>
<dbReference type="eggNOG" id="COG0048">
    <property type="taxonomic scope" value="Bacteria"/>
</dbReference>
<dbReference type="HOGENOM" id="CLU_104295_1_2_7"/>
<dbReference type="OrthoDB" id="9802366at2"/>
<dbReference type="BioCyc" id="SCEL448385:SCE_RS04395-MONOMER"/>
<dbReference type="Proteomes" id="UP000002139">
    <property type="component" value="Chromosome"/>
</dbReference>
<dbReference type="GO" id="GO:0015935">
    <property type="term" value="C:small ribosomal subunit"/>
    <property type="evidence" value="ECO:0007669"/>
    <property type="project" value="InterPro"/>
</dbReference>
<dbReference type="GO" id="GO:0019843">
    <property type="term" value="F:rRNA binding"/>
    <property type="evidence" value="ECO:0007669"/>
    <property type="project" value="UniProtKB-UniRule"/>
</dbReference>
<dbReference type="GO" id="GO:0003735">
    <property type="term" value="F:structural constituent of ribosome"/>
    <property type="evidence" value="ECO:0007669"/>
    <property type="project" value="InterPro"/>
</dbReference>
<dbReference type="GO" id="GO:0000049">
    <property type="term" value="F:tRNA binding"/>
    <property type="evidence" value="ECO:0007669"/>
    <property type="project" value="UniProtKB-UniRule"/>
</dbReference>
<dbReference type="GO" id="GO:0006412">
    <property type="term" value="P:translation"/>
    <property type="evidence" value="ECO:0007669"/>
    <property type="project" value="UniProtKB-UniRule"/>
</dbReference>
<dbReference type="CDD" id="cd03368">
    <property type="entry name" value="Ribosomal_S12"/>
    <property type="match status" value="1"/>
</dbReference>
<dbReference type="FunFam" id="2.40.50.140:FF:000001">
    <property type="entry name" value="30S ribosomal protein S12"/>
    <property type="match status" value="1"/>
</dbReference>
<dbReference type="Gene3D" id="2.40.50.140">
    <property type="entry name" value="Nucleic acid-binding proteins"/>
    <property type="match status" value="1"/>
</dbReference>
<dbReference type="HAMAP" id="MF_00403_B">
    <property type="entry name" value="Ribosomal_uS12_B"/>
    <property type="match status" value="1"/>
</dbReference>
<dbReference type="InterPro" id="IPR012340">
    <property type="entry name" value="NA-bd_OB-fold"/>
</dbReference>
<dbReference type="InterPro" id="IPR006032">
    <property type="entry name" value="Ribosomal_uS12"/>
</dbReference>
<dbReference type="InterPro" id="IPR005679">
    <property type="entry name" value="Ribosomal_uS12_bac"/>
</dbReference>
<dbReference type="NCBIfam" id="TIGR00981">
    <property type="entry name" value="rpsL_bact"/>
    <property type="match status" value="1"/>
</dbReference>
<dbReference type="PANTHER" id="PTHR11652">
    <property type="entry name" value="30S RIBOSOMAL PROTEIN S12 FAMILY MEMBER"/>
    <property type="match status" value="1"/>
</dbReference>
<dbReference type="Pfam" id="PF00164">
    <property type="entry name" value="Ribosom_S12_S23"/>
    <property type="match status" value="1"/>
</dbReference>
<dbReference type="PIRSF" id="PIRSF002133">
    <property type="entry name" value="Ribosomal_S12/S23"/>
    <property type="match status" value="1"/>
</dbReference>
<dbReference type="PRINTS" id="PR01034">
    <property type="entry name" value="RIBOSOMALS12"/>
</dbReference>
<dbReference type="SUPFAM" id="SSF50249">
    <property type="entry name" value="Nucleic acid-binding proteins"/>
    <property type="match status" value="1"/>
</dbReference>
<dbReference type="PROSITE" id="PS00055">
    <property type="entry name" value="RIBOSOMAL_S12"/>
    <property type="match status" value="1"/>
</dbReference>
<evidence type="ECO:0000250" key="1"/>
<evidence type="ECO:0000255" key="2">
    <source>
        <dbReference type="HAMAP-Rule" id="MF_00403"/>
    </source>
</evidence>
<evidence type="ECO:0000256" key="3">
    <source>
        <dbReference type="SAM" id="MobiDB-lite"/>
    </source>
</evidence>
<evidence type="ECO:0000305" key="4"/>
<feature type="chain" id="PRO_1000080418" description="Small ribosomal subunit protein uS12">
    <location>
        <begin position="1"/>
        <end position="132"/>
    </location>
</feature>
<feature type="region of interest" description="Disordered" evidence="3">
    <location>
        <begin position="101"/>
        <end position="132"/>
    </location>
</feature>
<feature type="compositionally biased region" description="Basic residues" evidence="3">
    <location>
        <begin position="117"/>
        <end position="132"/>
    </location>
</feature>
<feature type="modified residue" description="3-methylthioaspartic acid" evidence="1">
    <location>
        <position position="89"/>
    </location>
</feature>
<proteinExistence type="inferred from homology"/>
<protein>
    <recommendedName>
        <fullName evidence="2">Small ribosomal subunit protein uS12</fullName>
    </recommendedName>
    <alternativeName>
        <fullName evidence="4">30S ribosomal protein S12</fullName>
    </alternativeName>
</protein>
<keyword id="KW-0488">Methylation</keyword>
<keyword id="KW-1185">Reference proteome</keyword>
<keyword id="KW-0687">Ribonucleoprotein</keyword>
<keyword id="KW-0689">Ribosomal protein</keyword>
<keyword id="KW-0694">RNA-binding</keyword>
<keyword id="KW-0699">rRNA-binding</keyword>
<keyword id="KW-0820">tRNA-binding</keyword>
<comment type="function">
    <text evidence="2">With S4 and S5 plays an important role in translational accuracy.</text>
</comment>
<comment type="function">
    <text evidence="2">Interacts with and stabilizes bases of the 16S rRNA that are involved in tRNA selection in the A site and with the mRNA backbone. Located at the interface of the 30S and 50S subunits, it traverses the body of the 30S subunit contacting proteins on the other side and probably holding the rRNA structure together. The combined cluster of proteins S8, S12 and S17 appears to hold together the shoulder and platform of the 30S subunit.</text>
</comment>
<comment type="subunit">
    <text evidence="2">Part of the 30S ribosomal subunit. Contacts proteins S8 and S17. May interact with IF1 in the 30S initiation complex.</text>
</comment>
<comment type="similarity">
    <text evidence="2">Belongs to the universal ribosomal protein uS12 family.</text>
</comment>
<sequence>MPTISQLIRQGREAARYKTASPALKSCPQRRGVCVRVYTTTPKKPNSALRKVCRVRLSNQMEVTSYIPGEGHNLQEHSVVLIRGGRVKDLPGVRYHVVRGTLDASGAAGPSSTNKATRNRKRSKYGVKRPKA</sequence>
<name>RS12_SORC5</name>
<reference key="1">
    <citation type="journal article" date="2007" name="Nat. Biotechnol.">
        <title>Complete genome sequence of the myxobacterium Sorangium cellulosum.</title>
        <authorList>
            <person name="Schneiker S."/>
            <person name="Perlova O."/>
            <person name="Kaiser O."/>
            <person name="Gerth K."/>
            <person name="Alici A."/>
            <person name="Altmeyer M.O."/>
            <person name="Bartels D."/>
            <person name="Bekel T."/>
            <person name="Beyer S."/>
            <person name="Bode E."/>
            <person name="Bode H.B."/>
            <person name="Bolten C.J."/>
            <person name="Choudhuri J.V."/>
            <person name="Doss S."/>
            <person name="Elnakady Y.A."/>
            <person name="Frank B."/>
            <person name="Gaigalat L."/>
            <person name="Goesmann A."/>
            <person name="Groeger C."/>
            <person name="Gross F."/>
            <person name="Jelsbak L."/>
            <person name="Jelsbak L."/>
            <person name="Kalinowski J."/>
            <person name="Kegler C."/>
            <person name="Knauber T."/>
            <person name="Konietzny S."/>
            <person name="Kopp M."/>
            <person name="Krause L."/>
            <person name="Krug D."/>
            <person name="Linke B."/>
            <person name="Mahmud T."/>
            <person name="Martinez-Arias R."/>
            <person name="McHardy A.C."/>
            <person name="Merai M."/>
            <person name="Meyer F."/>
            <person name="Mormann S."/>
            <person name="Munoz-Dorado J."/>
            <person name="Perez J."/>
            <person name="Pradella S."/>
            <person name="Rachid S."/>
            <person name="Raddatz G."/>
            <person name="Rosenau F."/>
            <person name="Rueckert C."/>
            <person name="Sasse F."/>
            <person name="Scharfe M."/>
            <person name="Schuster S.C."/>
            <person name="Suen G."/>
            <person name="Treuner-Lange A."/>
            <person name="Velicer G.J."/>
            <person name="Vorholter F.-J."/>
            <person name="Weissman K.J."/>
            <person name="Welch R.D."/>
            <person name="Wenzel S.C."/>
            <person name="Whitworth D.E."/>
            <person name="Wilhelm S."/>
            <person name="Wittmann C."/>
            <person name="Bloecker H."/>
            <person name="Puehler A."/>
            <person name="Mueller R."/>
        </authorList>
    </citation>
    <scope>NUCLEOTIDE SEQUENCE [LARGE SCALE GENOMIC DNA]</scope>
    <source>
        <strain>So ce56</strain>
    </source>
</reference>
<accession>A9ETB7</accession>
<organism>
    <name type="scientific">Sorangium cellulosum (strain So ce56)</name>
    <name type="common">Polyangium cellulosum (strain So ce56)</name>
    <dbReference type="NCBI Taxonomy" id="448385"/>
    <lineage>
        <taxon>Bacteria</taxon>
        <taxon>Pseudomonadati</taxon>
        <taxon>Myxococcota</taxon>
        <taxon>Polyangia</taxon>
        <taxon>Polyangiales</taxon>
        <taxon>Polyangiaceae</taxon>
        <taxon>Sorangium</taxon>
    </lineage>
</organism>